<feature type="chain" id="PRO_0000195128" description="Dynein light chain 1, cytoplasmic">
    <location>
        <begin position="1"/>
        <end position="89"/>
    </location>
</feature>
<feature type="region of interest" description="Interaction with ESR1" evidence="1">
    <location>
        <begin position="67"/>
        <end position="89"/>
    </location>
</feature>
<feature type="modified residue" description="N6-acetyllysine" evidence="3">
    <location>
        <position position="36"/>
    </location>
</feature>
<feature type="modified residue" description="Phosphoserine" evidence="3">
    <location>
        <position position="88"/>
    </location>
</feature>
<feature type="cross-link" description="Glycyl lysine isopeptide (Lys-Gly) (interchain with G-Cter in SUMO2)" evidence="3">
    <location>
        <position position="43"/>
    </location>
</feature>
<evidence type="ECO:0000250" key="1"/>
<evidence type="ECO:0000250" key="2">
    <source>
        <dbReference type="UniProtKB" id="P61285"/>
    </source>
</evidence>
<evidence type="ECO:0000250" key="3">
    <source>
        <dbReference type="UniProtKB" id="P63167"/>
    </source>
</evidence>
<evidence type="ECO:0000250" key="4">
    <source>
        <dbReference type="UniProtKB" id="P63168"/>
    </source>
</evidence>
<evidence type="ECO:0000250" key="5">
    <source>
        <dbReference type="UniProtKB" id="P63170"/>
    </source>
</evidence>
<evidence type="ECO:0000305" key="6"/>
<comment type="function">
    <text evidence="2 3 5">Acts as one of several non-catalytic accessory components of the cytoplasmic dynein 1 complex that are thought to be involved in linking dynein to cargos and to adapter proteins that regulate dynein function (By similarity). Cytoplasmic dynein 1 acts as a motor for the intracellular retrograde motility of vesicles and organelles along microtubules (By similarity). May play a role in changing or maintaining the spatial distribution of cytoskeletal structures (By similarity). In addition to its role in cytoskeleton and transport, acts as a protein-protein adapter, which inhibits and/or sequesters target proteins (By similarity). Involved in the response to DNA damage by acting as a key regulator of DNA end resection: when phosphorylated at Ser-88, recruited to DNA double-strand breaks (DSBs) by TP53BP1 and acts by disrupting MRE11 dimerization, thereby inhibiting DNA end resection (By similarity). In a subset of DSBs, DYNLL1 remains unphosphorylated and promotes the recruitment of the Shieldin complex (By similarity). Binds and inhibits the catalytic activity of neuronal nitric oxide synthase/NOS1 (By similarity). Promotes transactivation functions of ESR1 and plays a role in the nuclear localization of ESR1 (By similarity). Regulates apoptotic activities of BCL2L11 by sequestering it to microtubules (By similarity). Upon apoptotic stimuli the BCL2L11-DYNLL1 complex dissociates from cytoplasmic dynein and translocates to mitochondria and sequesters BCL2 thus neutralizing its antiapoptotic activity (By similarity).</text>
</comment>
<comment type="subunit">
    <text evidence="2 3 4 5">Homodimer. Monomer; the monomeric form is incapable of binding to target proteins (By similarity). The cytoplasmic dynein 1 complex consists of two catalytic heavy chains (HCs) and a number of non-catalytic subunits presented by intermediate chains (ICs), light intermediate chains (LICs) and light chains (LCs); the composition seems to vary in respect to the IC, LIC and LC composition (By similarity). The heavy chain homodimer serves as a scaffold for the probable homodimeric assembly of the respective non-catalytic subunits (By similarity). The ICs and LICs bind directly to the HC dimer and the LCs assemble on the IC dimer (By similarity). Interacts with TXNDC17. Interacts with WWC1 and ESR1. The WWC1-DYNLL1 interaction is mandatory for the recruitment and transactivation functions of ESR1 or DYNLL1 to the target chromatin. Interacts with BCL2L11. Interacts with BCL2; the interaction is greatly enhanced in the nucleus and in mitochondria upon induction of apoptosis. Interacts with PAK1; the interaction requires dimeric DYNLL1. Interacts with MYZAP. Part of an astrin (SPAG5)-kinastrin (SKAP) complex containing KNSTRN, SPAG5, PLK1, DYNLL1 and SGO2. Interacts with ATMIN; this interaction inhibits ATMIN transcriptional activity and hence may play a role in a feedback loop whereby DYNLL1 inhibits transactivation of its own promoter by ATMIN. Interacts with NEK9 (not phosphorylated at 'Ser-944') (By similarity). Interacts with BICD2 (By similarity). Interacts with BCAS1 (By similarity). Interacts with Basson/BSN. Interacts with HDAC6. Interacts with TPPP. Interacts with AMBRA1 (via TQT motifs); tethering AMBRA1 to the cytoskeleton. Interacts with FAM83D/CHICA (via C-terminus). Interacts with HMMR, SPAG5/Astrin and KNSTRN/Kinastrin. Interacts with TLK2 (By similarity). Interacts with NOS1 (By similarity). Interacts with WWC1, WWC2 and WWC3. Interacts with MRE11; inhibiting MRE11 homodimerization and activity (By similarity).</text>
</comment>
<comment type="subcellular location">
    <subcellularLocation>
        <location evidence="3">Cytoplasm</location>
        <location evidence="3">Cytoskeleton</location>
        <location evidence="3">Microtubule organizing center</location>
        <location evidence="3">Centrosome</location>
    </subcellularLocation>
    <subcellularLocation>
        <location evidence="3">Chromosome</location>
    </subcellularLocation>
    <subcellularLocation>
        <location evidence="3">Cytoplasm</location>
        <location evidence="3">Cytoskeleton</location>
    </subcellularLocation>
    <subcellularLocation>
        <location evidence="3">Nucleus</location>
    </subcellularLocation>
    <subcellularLocation>
        <location evidence="3">Mitochondrion</location>
    </subcellularLocation>
    <text evidence="3">Upon induction of apoptosis translocates together with BCL2L11 to mitochondria. Recruited to DNA double-strand breaks (DSBs) by TP53BP1 when phosphorylated at Ser-88.</text>
</comment>
<comment type="PTM">
    <text evidence="3">Phosphorylation at Ser-88 promotes recruitment to DNA double-strand breaks (DSBs) by TP53BP1 and ability to inhibit MRE11.</text>
</comment>
<comment type="similarity">
    <text evidence="6">Belongs to the dynein light chain family.</text>
</comment>
<accession>P63169</accession>
<accession>Q15701</accession>
<dbReference type="EMBL" id="AF008304">
    <property type="protein sequence ID" value="AAC32530.1"/>
    <property type="molecule type" value="mRNA"/>
</dbReference>
<dbReference type="EMBL" id="AF020710">
    <property type="protein sequence ID" value="AAC32531.1"/>
    <property type="molecule type" value="Genomic_DNA"/>
</dbReference>
<dbReference type="RefSeq" id="NP_001075487.1">
    <property type="nucleotide sequence ID" value="NM_001082018.2"/>
</dbReference>
<dbReference type="RefSeq" id="XP_017204986.1">
    <property type="nucleotide sequence ID" value="XM_017349497.3"/>
</dbReference>
<dbReference type="BMRB" id="P63169"/>
<dbReference type="SMR" id="P63169"/>
<dbReference type="FunCoup" id="P63169">
    <property type="interactions" value="1259"/>
</dbReference>
<dbReference type="STRING" id="9986.ENSOCUP00000024256"/>
<dbReference type="PaxDb" id="9986-ENSOCUP00000024256"/>
<dbReference type="Ensembl" id="ENSOCUT00000017805.3">
    <property type="protein sequence ID" value="ENSOCUP00000024256.1"/>
    <property type="gene ID" value="ENSOCUG00000017806.3"/>
</dbReference>
<dbReference type="GeneID" id="100008650"/>
<dbReference type="KEGG" id="ocu:100008650"/>
<dbReference type="CTD" id="8655"/>
<dbReference type="eggNOG" id="KOG3430">
    <property type="taxonomic scope" value="Eukaryota"/>
</dbReference>
<dbReference type="GeneTree" id="ENSGT00390000000378"/>
<dbReference type="HOGENOM" id="CLU_070944_4_0_1"/>
<dbReference type="InParanoid" id="P63169"/>
<dbReference type="OMA" id="THEKHCF"/>
<dbReference type="OrthoDB" id="10033309at2759"/>
<dbReference type="TreeFam" id="TF300264"/>
<dbReference type="Proteomes" id="UP000001811">
    <property type="component" value="Chromosome 21"/>
</dbReference>
<dbReference type="Bgee" id="ENSOCUG00000017806">
    <property type="expression patterns" value="Expressed in testis and 16 other cell types or tissues"/>
</dbReference>
<dbReference type="GO" id="GO:0005813">
    <property type="term" value="C:centrosome"/>
    <property type="evidence" value="ECO:0007669"/>
    <property type="project" value="UniProtKB-SubCell"/>
</dbReference>
<dbReference type="GO" id="GO:0005929">
    <property type="term" value="C:cilium"/>
    <property type="evidence" value="ECO:0007669"/>
    <property type="project" value="GOC"/>
</dbReference>
<dbReference type="GO" id="GO:0005868">
    <property type="term" value="C:cytoplasmic dynein complex"/>
    <property type="evidence" value="ECO:0000250"/>
    <property type="project" value="UniProtKB"/>
</dbReference>
<dbReference type="GO" id="GO:0005856">
    <property type="term" value="C:cytoskeleton"/>
    <property type="evidence" value="ECO:0000250"/>
    <property type="project" value="UniProtKB"/>
</dbReference>
<dbReference type="GO" id="GO:0000776">
    <property type="term" value="C:kinetochore"/>
    <property type="evidence" value="ECO:0000250"/>
    <property type="project" value="UniProtKB"/>
</dbReference>
<dbReference type="GO" id="GO:0005874">
    <property type="term" value="C:microtubule"/>
    <property type="evidence" value="ECO:0007669"/>
    <property type="project" value="UniProtKB-KW"/>
</dbReference>
<dbReference type="GO" id="GO:0005739">
    <property type="term" value="C:mitochondrion"/>
    <property type="evidence" value="ECO:0007669"/>
    <property type="project" value="UniProtKB-SubCell"/>
</dbReference>
<dbReference type="GO" id="GO:0072686">
    <property type="term" value="C:mitotic spindle"/>
    <property type="evidence" value="ECO:0000250"/>
    <property type="project" value="UniProtKB"/>
</dbReference>
<dbReference type="GO" id="GO:0005634">
    <property type="term" value="C:nucleus"/>
    <property type="evidence" value="ECO:0007669"/>
    <property type="project" value="UniProtKB-SubCell"/>
</dbReference>
<dbReference type="GO" id="GO:0035861">
    <property type="term" value="C:site of double-strand break"/>
    <property type="evidence" value="ECO:0000250"/>
    <property type="project" value="UniProtKB"/>
</dbReference>
<dbReference type="GO" id="GO:0045505">
    <property type="term" value="F:dynein intermediate chain binding"/>
    <property type="evidence" value="ECO:0007669"/>
    <property type="project" value="TreeGrafter"/>
</dbReference>
<dbReference type="GO" id="GO:0004857">
    <property type="term" value="F:enzyme inhibitor activity"/>
    <property type="evidence" value="ECO:0000250"/>
    <property type="project" value="UniProtKB"/>
</dbReference>
<dbReference type="GO" id="GO:0006915">
    <property type="term" value="P:apoptotic process"/>
    <property type="evidence" value="ECO:0007669"/>
    <property type="project" value="UniProtKB-KW"/>
</dbReference>
<dbReference type="GO" id="GO:0006974">
    <property type="term" value="P:DNA damage response"/>
    <property type="evidence" value="ECO:0007669"/>
    <property type="project" value="UniProtKB-KW"/>
</dbReference>
<dbReference type="GO" id="GO:0035721">
    <property type="term" value="P:intraciliary retrograde transport"/>
    <property type="evidence" value="ECO:0007669"/>
    <property type="project" value="TreeGrafter"/>
</dbReference>
<dbReference type="GO" id="GO:0044458">
    <property type="term" value="P:motile cilium assembly"/>
    <property type="evidence" value="ECO:0007669"/>
    <property type="project" value="TreeGrafter"/>
</dbReference>
<dbReference type="GO" id="GO:0110027">
    <property type="term" value="P:negative regulation of DNA strand resection involved in replication fork processing"/>
    <property type="evidence" value="ECO:0000250"/>
    <property type="project" value="UniProtKB"/>
</dbReference>
<dbReference type="CDD" id="cd21452">
    <property type="entry name" value="DLC-like_DYNLL1_DYNLL2"/>
    <property type="match status" value="1"/>
</dbReference>
<dbReference type="FunFam" id="3.30.740.10:FF:000001">
    <property type="entry name" value="Dynein light chain"/>
    <property type="match status" value="1"/>
</dbReference>
<dbReference type="Gene3D" id="3.30.740.10">
    <property type="entry name" value="Protein Inhibitor Of Neuronal Nitric Oxide Synthase"/>
    <property type="match status" value="1"/>
</dbReference>
<dbReference type="InterPro" id="IPR037177">
    <property type="entry name" value="DLC_sf"/>
</dbReference>
<dbReference type="InterPro" id="IPR019763">
    <property type="entry name" value="Dynein_light_1/2_CS"/>
</dbReference>
<dbReference type="InterPro" id="IPR001372">
    <property type="entry name" value="Dynein_light_chain_typ-1/2"/>
</dbReference>
<dbReference type="PANTHER" id="PTHR11886">
    <property type="entry name" value="DYNEIN LIGHT CHAIN"/>
    <property type="match status" value="1"/>
</dbReference>
<dbReference type="PANTHER" id="PTHR11886:SF91">
    <property type="entry name" value="DYNEIN LIGHT CHAIN 1, CYTOPLASMIC"/>
    <property type="match status" value="1"/>
</dbReference>
<dbReference type="Pfam" id="PF01221">
    <property type="entry name" value="Dynein_light"/>
    <property type="match status" value="1"/>
</dbReference>
<dbReference type="SMART" id="SM01375">
    <property type="entry name" value="Dynein_light"/>
    <property type="match status" value="1"/>
</dbReference>
<dbReference type="SUPFAM" id="SSF54648">
    <property type="entry name" value="DLC"/>
    <property type="match status" value="1"/>
</dbReference>
<dbReference type="PROSITE" id="PS01239">
    <property type="entry name" value="DYNEIN_LIGHT_1"/>
    <property type="match status" value="1"/>
</dbReference>
<sequence>MCDRKAVIKNADMSEEMQQDSVECATQALEKYNIEKDIAAHIKKEFDKKYNPTWHCIVGRNFGSYVTHETKHFIYFYLGQVAILLFKSG</sequence>
<reference key="1">
    <citation type="journal article" date="1998" name="Gene">
        <title>Cloning and structure of a rabbit protein inhibitor of neuronal nitric oxide synthase (PIN) gene and its pseudogene.</title>
        <authorList>
            <person name="Jeong Y."/>
            <person name="Won J."/>
            <person name="Yim J."/>
        </authorList>
    </citation>
    <scope>NUCLEOTIDE SEQUENCE [GENOMIC DNA / MRNA]</scope>
    <source>
        <tissue>Brain</tissue>
    </source>
</reference>
<reference key="2">
    <citation type="journal article" date="1998" name="Nat. Struct. Biol.">
        <title>Solution structure of a protein inhibitor of neuronal nitric oxide synthase.</title>
        <authorList>
            <person name="Tochio H."/>
            <person name="Ohki S."/>
            <person name="Zhang Q."/>
            <person name="Li M."/>
            <person name="Zhang M."/>
        </authorList>
    </citation>
    <scope>STRUCTURE BY NMR</scope>
</reference>
<gene>
    <name type="primary">DYNLL1</name>
    <name type="synonym">DLC1</name>
    <name type="synonym">DNCL1</name>
    <name type="synonym">DNCLC1</name>
</gene>
<name>DYL1_RABIT</name>
<keyword id="KW-0007">Acetylation</keyword>
<keyword id="KW-0010">Activator</keyword>
<keyword id="KW-0053">Apoptosis</keyword>
<keyword id="KW-0158">Chromosome</keyword>
<keyword id="KW-0963">Cytoplasm</keyword>
<keyword id="KW-0206">Cytoskeleton</keyword>
<keyword id="KW-0227">DNA damage</keyword>
<keyword id="KW-0243">Dynein</keyword>
<keyword id="KW-1017">Isopeptide bond</keyword>
<keyword id="KW-0493">Microtubule</keyword>
<keyword id="KW-0496">Mitochondrion</keyword>
<keyword id="KW-0505">Motor protein</keyword>
<keyword id="KW-0539">Nucleus</keyword>
<keyword id="KW-0597">Phosphoprotein</keyword>
<keyword id="KW-1185">Reference proteome</keyword>
<keyword id="KW-0804">Transcription</keyword>
<keyword id="KW-0805">Transcription regulation</keyword>
<keyword id="KW-0813">Transport</keyword>
<keyword id="KW-0832">Ubl conjugation</keyword>
<protein>
    <recommendedName>
        <fullName>Dynein light chain 1, cytoplasmic</fullName>
    </recommendedName>
    <alternativeName>
        <fullName>8 kDa dynein light chain</fullName>
        <shortName>DLC8</shortName>
    </alternativeName>
    <alternativeName>
        <fullName>Dynein light chain LC8-type 1</fullName>
    </alternativeName>
    <alternativeName>
        <fullName>Protein inhibitor of neuronal nitric oxide synthase</fullName>
        <shortName>PIN</shortName>
    </alternativeName>
</protein>
<proteinExistence type="evidence at protein level"/>
<organism>
    <name type="scientific">Oryctolagus cuniculus</name>
    <name type="common">Rabbit</name>
    <dbReference type="NCBI Taxonomy" id="9986"/>
    <lineage>
        <taxon>Eukaryota</taxon>
        <taxon>Metazoa</taxon>
        <taxon>Chordata</taxon>
        <taxon>Craniata</taxon>
        <taxon>Vertebrata</taxon>
        <taxon>Euteleostomi</taxon>
        <taxon>Mammalia</taxon>
        <taxon>Eutheria</taxon>
        <taxon>Euarchontoglires</taxon>
        <taxon>Glires</taxon>
        <taxon>Lagomorpha</taxon>
        <taxon>Leporidae</taxon>
        <taxon>Oryctolagus</taxon>
    </lineage>
</organism>